<reference key="1">
    <citation type="journal article" date="2009" name="PLoS ONE">
        <title>Complete genome sequence of the aerobic CO-oxidizing thermophile Thermomicrobium roseum.</title>
        <authorList>
            <person name="Wu D."/>
            <person name="Raymond J."/>
            <person name="Wu M."/>
            <person name="Chatterji S."/>
            <person name="Ren Q."/>
            <person name="Graham J.E."/>
            <person name="Bryant D.A."/>
            <person name="Robb F."/>
            <person name="Colman A."/>
            <person name="Tallon L.J."/>
            <person name="Badger J.H."/>
            <person name="Madupu R."/>
            <person name="Ward N.L."/>
            <person name="Eisen J.A."/>
        </authorList>
    </citation>
    <scope>NUCLEOTIDE SEQUENCE [LARGE SCALE GENOMIC DNA]</scope>
    <source>
        <strain>ATCC 27502 / DSM 5159 / P-2</strain>
    </source>
</reference>
<evidence type="ECO:0000255" key="1">
    <source>
        <dbReference type="HAMAP-Rule" id="MF_00016"/>
    </source>
</evidence>
<accession>B9KZ09</accession>
<dbReference type="EC" id="3.6.4.-" evidence="1"/>
<dbReference type="EMBL" id="CP001275">
    <property type="protein sequence ID" value="ACM04959.1"/>
    <property type="molecule type" value="Genomic_DNA"/>
</dbReference>
<dbReference type="RefSeq" id="WP_012642109.1">
    <property type="nucleotide sequence ID" value="NC_011959.1"/>
</dbReference>
<dbReference type="SMR" id="B9KZ09"/>
<dbReference type="STRING" id="309801.trd_0718"/>
<dbReference type="KEGG" id="tro:trd_0718"/>
<dbReference type="eggNOG" id="COG2255">
    <property type="taxonomic scope" value="Bacteria"/>
</dbReference>
<dbReference type="HOGENOM" id="CLU_055599_1_0_0"/>
<dbReference type="OrthoDB" id="9804478at2"/>
<dbReference type="Proteomes" id="UP000000447">
    <property type="component" value="Chromosome"/>
</dbReference>
<dbReference type="GO" id="GO:0005737">
    <property type="term" value="C:cytoplasm"/>
    <property type="evidence" value="ECO:0007669"/>
    <property type="project" value="UniProtKB-SubCell"/>
</dbReference>
<dbReference type="GO" id="GO:0048476">
    <property type="term" value="C:Holliday junction resolvase complex"/>
    <property type="evidence" value="ECO:0007669"/>
    <property type="project" value="UniProtKB-UniRule"/>
</dbReference>
<dbReference type="GO" id="GO:0005524">
    <property type="term" value="F:ATP binding"/>
    <property type="evidence" value="ECO:0007669"/>
    <property type="project" value="UniProtKB-UniRule"/>
</dbReference>
<dbReference type="GO" id="GO:0016887">
    <property type="term" value="F:ATP hydrolysis activity"/>
    <property type="evidence" value="ECO:0007669"/>
    <property type="project" value="InterPro"/>
</dbReference>
<dbReference type="GO" id="GO:0000400">
    <property type="term" value="F:four-way junction DNA binding"/>
    <property type="evidence" value="ECO:0007669"/>
    <property type="project" value="UniProtKB-UniRule"/>
</dbReference>
<dbReference type="GO" id="GO:0009378">
    <property type="term" value="F:four-way junction helicase activity"/>
    <property type="evidence" value="ECO:0007669"/>
    <property type="project" value="InterPro"/>
</dbReference>
<dbReference type="GO" id="GO:0006310">
    <property type="term" value="P:DNA recombination"/>
    <property type="evidence" value="ECO:0007669"/>
    <property type="project" value="UniProtKB-UniRule"/>
</dbReference>
<dbReference type="GO" id="GO:0006281">
    <property type="term" value="P:DNA repair"/>
    <property type="evidence" value="ECO:0007669"/>
    <property type="project" value="UniProtKB-UniRule"/>
</dbReference>
<dbReference type="CDD" id="cd00009">
    <property type="entry name" value="AAA"/>
    <property type="match status" value="1"/>
</dbReference>
<dbReference type="Gene3D" id="1.10.8.60">
    <property type="match status" value="1"/>
</dbReference>
<dbReference type="Gene3D" id="3.40.50.300">
    <property type="entry name" value="P-loop containing nucleotide triphosphate hydrolases"/>
    <property type="match status" value="1"/>
</dbReference>
<dbReference type="Gene3D" id="1.10.10.10">
    <property type="entry name" value="Winged helix-like DNA-binding domain superfamily/Winged helix DNA-binding domain"/>
    <property type="match status" value="1"/>
</dbReference>
<dbReference type="HAMAP" id="MF_00016">
    <property type="entry name" value="DNA_HJ_migration_RuvB"/>
    <property type="match status" value="1"/>
</dbReference>
<dbReference type="InterPro" id="IPR003593">
    <property type="entry name" value="AAA+_ATPase"/>
</dbReference>
<dbReference type="InterPro" id="IPR041445">
    <property type="entry name" value="AAA_lid_4"/>
</dbReference>
<dbReference type="InterPro" id="IPR004605">
    <property type="entry name" value="DNA_helicase_Holl-junc_RuvB"/>
</dbReference>
<dbReference type="InterPro" id="IPR027417">
    <property type="entry name" value="P-loop_NTPase"/>
</dbReference>
<dbReference type="InterPro" id="IPR008824">
    <property type="entry name" value="RuvB-like_N"/>
</dbReference>
<dbReference type="InterPro" id="IPR008823">
    <property type="entry name" value="RuvB_C"/>
</dbReference>
<dbReference type="InterPro" id="IPR036388">
    <property type="entry name" value="WH-like_DNA-bd_sf"/>
</dbReference>
<dbReference type="InterPro" id="IPR036390">
    <property type="entry name" value="WH_DNA-bd_sf"/>
</dbReference>
<dbReference type="NCBIfam" id="NF000868">
    <property type="entry name" value="PRK00080.1"/>
    <property type="match status" value="1"/>
</dbReference>
<dbReference type="NCBIfam" id="TIGR00635">
    <property type="entry name" value="ruvB"/>
    <property type="match status" value="1"/>
</dbReference>
<dbReference type="PANTHER" id="PTHR42848">
    <property type="match status" value="1"/>
</dbReference>
<dbReference type="PANTHER" id="PTHR42848:SF1">
    <property type="entry name" value="HOLLIDAY JUNCTION BRANCH MIGRATION COMPLEX SUBUNIT RUVB"/>
    <property type="match status" value="1"/>
</dbReference>
<dbReference type="Pfam" id="PF17864">
    <property type="entry name" value="AAA_lid_4"/>
    <property type="match status" value="1"/>
</dbReference>
<dbReference type="Pfam" id="PF05491">
    <property type="entry name" value="RuvB_C"/>
    <property type="match status" value="1"/>
</dbReference>
<dbReference type="Pfam" id="PF05496">
    <property type="entry name" value="RuvB_N"/>
    <property type="match status" value="1"/>
</dbReference>
<dbReference type="SMART" id="SM00382">
    <property type="entry name" value="AAA"/>
    <property type="match status" value="1"/>
</dbReference>
<dbReference type="SUPFAM" id="SSF52540">
    <property type="entry name" value="P-loop containing nucleoside triphosphate hydrolases"/>
    <property type="match status" value="1"/>
</dbReference>
<dbReference type="SUPFAM" id="SSF46785">
    <property type="entry name" value="Winged helix' DNA-binding domain"/>
    <property type="match status" value="1"/>
</dbReference>
<feature type="chain" id="PRO_1000116663" description="Holliday junction branch migration complex subunit RuvB">
    <location>
        <begin position="1"/>
        <end position="353"/>
    </location>
</feature>
<feature type="region of interest" description="Large ATPase domain (RuvB-L)" evidence="1">
    <location>
        <begin position="1"/>
        <end position="183"/>
    </location>
</feature>
<feature type="region of interest" description="Small ATPAse domain (RuvB-S)" evidence="1">
    <location>
        <begin position="184"/>
        <end position="254"/>
    </location>
</feature>
<feature type="region of interest" description="Head domain (RuvB-H)" evidence="1">
    <location>
        <begin position="257"/>
        <end position="353"/>
    </location>
</feature>
<feature type="binding site" evidence="1">
    <location>
        <position position="22"/>
    </location>
    <ligand>
        <name>ATP</name>
        <dbReference type="ChEBI" id="CHEBI:30616"/>
    </ligand>
</feature>
<feature type="binding site" evidence="1">
    <location>
        <position position="23"/>
    </location>
    <ligand>
        <name>ATP</name>
        <dbReference type="ChEBI" id="CHEBI:30616"/>
    </ligand>
</feature>
<feature type="binding site" evidence="1">
    <location>
        <position position="64"/>
    </location>
    <ligand>
        <name>ATP</name>
        <dbReference type="ChEBI" id="CHEBI:30616"/>
    </ligand>
</feature>
<feature type="binding site" evidence="1">
    <location>
        <position position="67"/>
    </location>
    <ligand>
        <name>ATP</name>
        <dbReference type="ChEBI" id="CHEBI:30616"/>
    </ligand>
</feature>
<feature type="binding site" evidence="1">
    <location>
        <position position="68"/>
    </location>
    <ligand>
        <name>ATP</name>
        <dbReference type="ChEBI" id="CHEBI:30616"/>
    </ligand>
</feature>
<feature type="binding site" evidence="1">
    <location>
        <position position="68"/>
    </location>
    <ligand>
        <name>Mg(2+)</name>
        <dbReference type="ChEBI" id="CHEBI:18420"/>
    </ligand>
</feature>
<feature type="binding site" evidence="1">
    <location>
        <position position="69"/>
    </location>
    <ligand>
        <name>ATP</name>
        <dbReference type="ChEBI" id="CHEBI:30616"/>
    </ligand>
</feature>
<feature type="binding site" evidence="1">
    <location>
        <begin position="130"/>
        <end position="132"/>
    </location>
    <ligand>
        <name>ATP</name>
        <dbReference type="ChEBI" id="CHEBI:30616"/>
    </ligand>
</feature>
<feature type="binding site" evidence="1">
    <location>
        <position position="173"/>
    </location>
    <ligand>
        <name>ATP</name>
        <dbReference type="ChEBI" id="CHEBI:30616"/>
    </ligand>
</feature>
<feature type="binding site" evidence="1">
    <location>
        <position position="183"/>
    </location>
    <ligand>
        <name>ATP</name>
        <dbReference type="ChEBI" id="CHEBI:30616"/>
    </ligand>
</feature>
<feature type="binding site" evidence="1">
    <location>
        <position position="220"/>
    </location>
    <ligand>
        <name>ATP</name>
        <dbReference type="ChEBI" id="CHEBI:30616"/>
    </ligand>
</feature>
<feature type="binding site" evidence="1">
    <location>
        <position position="312"/>
    </location>
    <ligand>
        <name>DNA</name>
        <dbReference type="ChEBI" id="CHEBI:16991"/>
    </ligand>
</feature>
<feature type="binding site" evidence="1">
    <location>
        <position position="317"/>
    </location>
    <ligand>
        <name>DNA</name>
        <dbReference type="ChEBI" id="CHEBI:16991"/>
    </ligand>
</feature>
<proteinExistence type="inferred from homology"/>
<keyword id="KW-0067">ATP-binding</keyword>
<keyword id="KW-0963">Cytoplasm</keyword>
<keyword id="KW-0227">DNA damage</keyword>
<keyword id="KW-0233">DNA recombination</keyword>
<keyword id="KW-0234">DNA repair</keyword>
<keyword id="KW-0238">DNA-binding</keyword>
<keyword id="KW-0378">Hydrolase</keyword>
<keyword id="KW-0547">Nucleotide-binding</keyword>
<keyword id="KW-1185">Reference proteome</keyword>
<sequence length="353" mass="39207">MNEPRIVAPQPTTSEQYFEETLRPRRLAEYIGQDRVKESLAIAIRAAQERGEPLDHLLFYGPPGLGKTTLAGIIAAEMGVNLRITSGPAIERPGDLVSILTNLRPGDVLFIDEIHRLNRLVEEILYPAMEDFAVDLVIGKGPAARSVRIALPRFTLVGATTRLALLTSPLRDRFGATYRLDFYDTAALRAIVERAARILQVPITSDGAEEIARRGRGTPRIAIRLLKRVRDYAQVIGDGTITRELARLALDQLAVDELGLDEVDRLILRTLVEKFDGGPVGIQTLAAATSEEPDTIESVYEPYLLQLGFLQRTPRGRIATRRAYEHLGLTYPENRLQLEIPFEHAASERSSDA</sequence>
<protein>
    <recommendedName>
        <fullName evidence="1">Holliday junction branch migration complex subunit RuvB</fullName>
        <ecNumber evidence="1">3.6.4.-</ecNumber>
    </recommendedName>
</protein>
<organism>
    <name type="scientific">Thermomicrobium roseum (strain ATCC 27502 / DSM 5159 / P-2)</name>
    <dbReference type="NCBI Taxonomy" id="309801"/>
    <lineage>
        <taxon>Bacteria</taxon>
        <taxon>Pseudomonadati</taxon>
        <taxon>Thermomicrobiota</taxon>
        <taxon>Thermomicrobia</taxon>
        <taxon>Thermomicrobiales</taxon>
        <taxon>Thermomicrobiaceae</taxon>
        <taxon>Thermomicrobium</taxon>
    </lineage>
</organism>
<gene>
    <name evidence="1" type="primary">ruvB</name>
    <name type="ordered locus">trd_0718</name>
</gene>
<comment type="function">
    <text evidence="1">The RuvA-RuvB-RuvC complex processes Holliday junction (HJ) DNA during genetic recombination and DNA repair, while the RuvA-RuvB complex plays an important role in the rescue of blocked DNA replication forks via replication fork reversal (RFR). RuvA specifically binds to HJ cruciform DNA, conferring on it an open structure. The RuvB hexamer acts as an ATP-dependent pump, pulling dsDNA into and through the RuvAB complex. RuvB forms 2 homohexamers on either side of HJ DNA bound by 1 or 2 RuvA tetramers; 4 subunits per hexamer contact DNA at a time. Coordinated motions by a converter formed by DNA-disengaged RuvB subunits stimulates ATP hydrolysis and nucleotide exchange. Immobilization of the converter enables RuvB to convert the ATP-contained energy into a lever motion, pulling 2 nucleotides of DNA out of the RuvA tetramer per ATP hydrolyzed, thus driving DNA branch migration. The RuvB motors rotate together with the DNA substrate, which together with the progressing nucleotide cycle form the mechanistic basis for DNA recombination by continuous HJ branch migration. Branch migration allows RuvC to scan DNA until it finds its consensus sequence, where it cleaves and resolves cruciform DNA.</text>
</comment>
<comment type="catalytic activity">
    <reaction evidence="1">
        <text>ATP + H2O = ADP + phosphate + H(+)</text>
        <dbReference type="Rhea" id="RHEA:13065"/>
        <dbReference type="ChEBI" id="CHEBI:15377"/>
        <dbReference type="ChEBI" id="CHEBI:15378"/>
        <dbReference type="ChEBI" id="CHEBI:30616"/>
        <dbReference type="ChEBI" id="CHEBI:43474"/>
        <dbReference type="ChEBI" id="CHEBI:456216"/>
    </reaction>
</comment>
<comment type="subunit">
    <text evidence="1">Homohexamer. Forms an RuvA(8)-RuvB(12)-Holliday junction (HJ) complex. HJ DNA is sandwiched between 2 RuvA tetramers; dsDNA enters through RuvA and exits via RuvB. An RuvB hexamer assembles on each DNA strand where it exits the tetramer. Each RuvB hexamer is contacted by two RuvA subunits (via domain III) on 2 adjacent RuvB subunits; this complex drives branch migration. In the full resolvosome a probable DNA-RuvA(4)-RuvB(12)-RuvC(2) complex forms which resolves the HJ.</text>
</comment>
<comment type="subcellular location">
    <subcellularLocation>
        <location evidence="1">Cytoplasm</location>
    </subcellularLocation>
</comment>
<comment type="domain">
    <text evidence="1">Has 3 domains, the large (RuvB-L) and small ATPase (RuvB-S) domains and the C-terminal head (RuvB-H) domain. The head domain binds DNA, while the ATPase domains jointly bind ATP, ADP or are empty depending on the state of the subunit in the translocation cycle. During a single DNA translocation step the structure of each domain remains the same, but their relative positions change.</text>
</comment>
<comment type="similarity">
    <text evidence="1">Belongs to the RuvB family.</text>
</comment>
<name>RUVB_THERP</name>